<reference key="1">
    <citation type="journal article" date="2007" name="PLoS Genet.">
        <title>Patterns and implications of gene gain and loss in the evolution of Prochlorococcus.</title>
        <authorList>
            <person name="Kettler G.C."/>
            <person name="Martiny A.C."/>
            <person name="Huang K."/>
            <person name="Zucker J."/>
            <person name="Coleman M.L."/>
            <person name="Rodrigue S."/>
            <person name="Chen F."/>
            <person name="Lapidus A."/>
            <person name="Ferriera S."/>
            <person name="Johnson J."/>
            <person name="Steglich C."/>
            <person name="Church G.M."/>
            <person name="Richardson P."/>
            <person name="Chisholm S.W."/>
        </authorList>
    </citation>
    <scope>NUCLEOTIDE SEQUENCE [LARGE SCALE GENOMIC DNA]</scope>
    <source>
        <strain>AS9601</strain>
    </source>
</reference>
<organism>
    <name type="scientific">Prochlorococcus marinus (strain AS9601)</name>
    <dbReference type="NCBI Taxonomy" id="146891"/>
    <lineage>
        <taxon>Bacteria</taxon>
        <taxon>Bacillati</taxon>
        <taxon>Cyanobacteriota</taxon>
        <taxon>Cyanophyceae</taxon>
        <taxon>Synechococcales</taxon>
        <taxon>Prochlorococcaceae</taxon>
        <taxon>Prochlorococcus</taxon>
    </lineage>
</organism>
<protein>
    <recommendedName>
        <fullName evidence="1">Alanine--tRNA ligase</fullName>
        <ecNumber evidence="1">6.1.1.7</ecNumber>
    </recommendedName>
    <alternativeName>
        <fullName evidence="1">Alanyl-tRNA synthetase</fullName>
        <shortName evidence="1">AlaRS</shortName>
    </alternativeName>
</protein>
<feature type="chain" id="PRO_0000347723" description="Alanine--tRNA ligase">
    <location>
        <begin position="1"/>
        <end position="886"/>
    </location>
</feature>
<feature type="binding site" evidence="1">
    <location>
        <position position="564"/>
    </location>
    <ligand>
        <name>Zn(2+)</name>
        <dbReference type="ChEBI" id="CHEBI:29105"/>
    </ligand>
</feature>
<feature type="binding site" evidence="1">
    <location>
        <position position="568"/>
    </location>
    <ligand>
        <name>Zn(2+)</name>
        <dbReference type="ChEBI" id="CHEBI:29105"/>
    </ligand>
</feature>
<feature type="binding site" evidence="1">
    <location>
        <position position="666"/>
    </location>
    <ligand>
        <name>Zn(2+)</name>
        <dbReference type="ChEBI" id="CHEBI:29105"/>
    </ligand>
</feature>
<feature type="binding site" evidence="1">
    <location>
        <position position="670"/>
    </location>
    <ligand>
        <name>Zn(2+)</name>
        <dbReference type="ChEBI" id="CHEBI:29105"/>
    </ligand>
</feature>
<comment type="function">
    <text evidence="1">Catalyzes the attachment of alanine to tRNA(Ala) in a two-step reaction: alanine is first activated by ATP to form Ala-AMP and then transferred to the acceptor end of tRNA(Ala). Also edits incorrectly charged Ser-tRNA(Ala) and Gly-tRNA(Ala) via its editing domain.</text>
</comment>
<comment type="catalytic activity">
    <reaction evidence="1">
        <text>tRNA(Ala) + L-alanine + ATP = L-alanyl-tRNA(Ala) + AMP + diphosphate</text>
        <dbReference type="Rhea" id="RHEA:12540"/>
        <dbReference type="Rhea" id="RHEA-COMP:9657"/>
        <dbReference type="Rhea" id="RHEA-COMP:9923"/>
        <dbReference type="ChEBI" id="CHEBI:30616"/>
        <dbReference type="ChEBI" id="CHEBI:33019"/>
        <dbReference type="ChEBI" id="CHEBI:57972"/>
        <dbReference type="ChEBI" id="CHEBI:78442"/>
        <dbReference type="ChEBI" id="CHEBI:78497"/>
        <dbReference type="ChEBI" id="CHEBI:456215"/>
        <dbReference type="EC" id="6.1.1.7"/>
    </reaction>
</comment>
<comment type="cofactor">
    <cofactor evidence="1">
        <name>Zn(2+)</name>
        <dbReference type="ChEBI" id="CHEBI:29105"/>
    </cofactor>
    <text evidence="1">Binds 1 zinc ion per subunit.</text>
</comment>
<comment type="subcellular location">
    <subcellularLocation>
        <location evidence="1">Cytoplasm</location>
    </subcellularLocation>
</comment>
<comment type="domain">
    <text evidence="1">Consists of three domains; the N-terminal catalytic domain, the editing domain and the C-terminal C-Ala domain. The editing domain removes incorrectly charged amino acids, while the C-Ala domain, along with tRNA(Ala), serves as a bridge to cooperatively bring together the editing and aminoacylation centers thus stimulating deacylation of misacylated tRNAs.</text>
</comment>
<comment type="similarity">
    <text evidence="1">Belongs to the class-II aminoacyl-tRNA synthetase family.</text>
</comment>
<sequence>MTSQLIKKIVTGDEIRNAFLKFYSEKLHKIIPSASLIPDDPTVMLTIAGMLPFKPVFLGLKERPSKRATSSQKCIRTNDIENVGVTARHHTFFEMLGNFSFGDYFKREAIQWAWELVTNIYQLSVENIIVSVFHEDEESAKIWSDEIGIHPDRIVKLGEEDNFWSSGKTGPCGPCSELYYDFHPEKGLQNIDLEDGDRFIEFYNLVFMQYNRDPNGKLTDLKFKNIDTGMGLERMAQILQKKQNNYETDLIFPIIQKICEIANIDYFSSDDKNKISLKIIGDHTRAVIHLISDGVSASNLGRGYILRRLIRRMVRHGRLLGITNEFLPHIASVGINLMQNNYPDLKNNNDLILNEIKIEEIRFRETLERGEKLLDELISSGQKLISGFKAFELYDTYGFPLELTVEIAEEHSISVDVKGFEEEMNVQKERAKAASSNIDLTLEGSLEREIDVFNKTVFNGYKSLLSEAEIKGIFLDSTLVKEASEGQKVLIVLDQTTFYGESGGQVGDIGTIFSNDVEVLVDNVMRKKNVFLHYGTIKKGKLTIGQKVKTNVSSSNRAKAAANHTATHLLQSALKSVINESVGQKGSLVAFNKLRFDFNSSNPISKDQISKIETLVNSWIMENHSLEIKNMSKSEALEKGAVAMFGEKYDDEVRVVNVPGVSMELCGGTHVKTTSELGSFKIISEEGISAGVRRIEALSGQSALDYFSDRNALVNQLSDLLKANPNQLFERVNNLQAELINKNKEIQKMKDEIAYFKYSSIKSSAEIVNSFSILVNQIDGLDGNSLQSAALNLTSHLGNKAIVILGGIPNPENRKLLFVVSLGDDAVKIGLHAGKLINEIARICSGGGGGKPNFAQAGAKDIDKLSDALDYAKNYLQKTLASHSDK</sequence>
<gene>
    <name evidence="1" type="primary">alaS</name>
    <name type="ordered locus">A9601_00451</name>
</gene>
<keyword id="KW-0030">Aminoacyl-tRNA synthetase</keyword>
<keyword id="KW-0067">ATP-binding</keyword>
<keyword id="KW-0963">Cytoplasm</keyword>
<keyword id="KW-0436">Ligase</keyword>
<keyword id="KW-0479">Metal-binding</keyword>
<keyword id="KW-0547">Nucleotide-binding</keyword>
<keyword id="KW-0648">Protein biosynthesis</keyword>
<keyword id="KW-0694">RNA-binding</keyword>
<keyword id="KW-0820">tRNA-binding</keyword>
<keyword id="KW-0862">Zinc</keyword>
<proteinExistence type="inferred from homology"/>
<dbReference type="EC" id="6.1.1.7" evidence="1"/>
<dbReference type="EMBL" id="CP000551">
    <property type="protein sequence ID" value="ABM69333.1"/>
    <property type="molecule type" value="Genomic_DNA"/>
</dbReference>
<dbReference type="RefSeq" id="WP_011817523.1">
    <property type="nucleotide sequence ID" value="NC_008816.1"/>
</dbReference>
<dbReference type="SMR" id="A2BNH2"/>
<dbReference type="STRING" id="146891.A9601_00451"/>
<dbReference type="KEGG" id="pmb:A9601_00451"/>
<dbReference type="eggNOG" id="COG0013">
    <property type="taxonomic scope" value="Bacteria"/>
</dbReference>
<dbReference type="HOGENOM" id="CLU_004485_1_1_3"/>
<dbReference type="OrthoDB" id="9803884at2"/>
<dbReference type="Proteomes" id="UP000002590">
    <property type="component" value="Chromosome"/>
</dbReference>
<dbReference type="GO" id="GO:0005829">
    <property type="term" value="C:cytosol"/>
    <property type="evidence" value="ECO:0007669"/>
    <property type="project" value="TreeGrafter"/>
</dbReference>
<dbReference type="GO" id="GO:0004813">
    <property type="term" value="F:alanine-tRNA ligase activity"/>
    <property type="evidence" value="ECO:0007669"/>
    <property type="project" value="UniProtKB-UniRule"/>
</dbReference>
<dbReference type="GO" id="GO:0002161">
    <property type="term" value="F:aminoacyl-tRNA deacylase activity"/>
    <property type="evidence" value="ECO:0007669"/>
    <property type="project" value="TreeGrafter"/>
</dbReference>
<dbReference type="GO" id="GO:0005524">
    <property type="term" value="F:ATP binding"/>
    <property type="evidence" value="ECO:0007669"/>
    <property type="project" value="UniProtKB-UniRule"/>
</dbReference>
<dbReference type="GO" id="GO:0000049">
    <property type="term" value="F:tRNA binding"/>
    <property type="evidence" value="ECO:0007669"/>
    <property type="project" value="UniProtKB-KW"/>
</dbReference>
<dbReference type="GO" id="GO:0008270">
    <property type="term" value="F:zinc ion binding"/>
    <property type="evidence" value="ECO:0007669"/>
    <property type="project" value="UniProtKB-UniRule"/>
</dbReference>
<dbReference type="GO" id="GO:0006419">
    <property type="term" value="P:alanyl-tRNA aminoacylation"/>
    <property type="evidence" value="ECO:0007669"/>
    <property type="project" value="UniProtKB-UniRule"/>
</dbReference>
<dbReference type="CDD" id="cd00673">
    <property type="entry name" value="AlaRS_core"/>
    <property type="match status" value="1"/>
</dbReference>
<dbReference type="FunFam" id="2.40.30.130:FF:000001">
    <property type="entry name" value="Alanine--tRNA ligase"/>
    <property type="match status" value="1"/>
</dbReference>
<dbReference type="FunFam" id="3.10.310.40:FF:000001">
    <property type="entry name" value="Alanine--tRNA ligase"/>
    <property type="match status" value="1"/>
</dbReference>
<dbReference type="FunFam" id="3.30.54.20:FF:000001">
    <property type="entry name" value="Alanine--tRNA ligase"/>
    <property type="match status" value="1"/>
</dbReference>
<dbReference type="FunFam" id="3.30.930.10:FF:000004">
    <property type="entry name" value="Alanine--tRNA ligase"/>
    <property type="match status" value="1"/>
</dbReference>
<dbReference type="FunFam" id="3.30.980.10:FF:000004">
    <property type="entry name" value="Alanine--tRNA ligase, cytoplasmic"/>
    <property type="match status" value="1"/>
</dbReference>
<dbReference type="Gene3D" id="2.40.30.130">
    <property type="match status" value="1"/>
</dbReference>
<dbReference type="Gene3D" id="3.10.310.40">
    <property type="match status" value="1"/>
</dbReference>
<dbReference type="Gene3D" id="3.30.54.20">
    <property type="match status" value="1"/>
</dbReference>
<dbReference type="Gene3D" id="6.10.250.550">
    <property type="match status" value="1"/>
</dbReference>
<dbReference type="Gene3D" id="3.30.930.10">
    <property type="entry name" value="Bira Bifunctional Protein, Domain 2"/>
    <property type="match status" value="1"/>
</dbReference>
<dbReference type="Gene3D" id="3.30.980.10">
    <property type="entry name" value="Threonyl-trna Synthetase, Chain A, domain 2"/>
    <property type="match status" value="1"/>
</dbReference>
<dbReference type="HAMAP" id="MF_00036_B">
    <property type="entry name" value="Ala_tRNA_synth_B"/>
    <property type="match status" value="1"/>
</dbReference>
<dbReference type="InterPro" id="IPR045864">
    <property type="entry name" value="aa-tRNA-synth_II/BPL/LPL"/>
</dbReference>
<dbReference type="InterPro" id="IPR002318">
    <property type="entry name" value="Ala-tRNA-lgiase_IIc"/>
</dbReference>
<dbReference type="InterPro" id="IPR018162">
    <property type="entry name" value="Ala-tRNA-ligase_IIc_anticod-bd"/>
</dbReference>
<dbReference type="InterPro" id="IPR018165">
    <property type="entry name" value="Ala-tRNA-synth_IIc_core"/>
</dbReference>
<dbReference type="InterPro" id="IPR018164">
    <property type="entry name" value="Ala-tRNA-synth_IIc_N"/>
</dbReference>
<dbReference type="InterPro" id="IPR050058">
    <property type="entry name" value="Ala-tRNA_ligase"/>
</dbReference>
<dbReference type="InterPro" id="IPR023033">
    <property type="entry name" value="Ala_tRNA_ligase_euk/bac"/>
</dbReference>
<dbReference type="InterPro" id="IPR003156">
    <property type="entry name" value="DHHA1_dom"/>
</dbReference>
<dbReference type="InterPro" id="IPR018163">
    <property type="entry name" value="Thr/Ala-tRNA-synth_IIc_edit"/>
</dbReference>
<dbReference type="InterPro" id="IPR009000">
    <property type="entry name" value="Transl_B-barrel_sf"/>
</dbReference>
<dbReference type="InterPro" id="IPR012947">
    <property type="entry name" value="tRNA_SAD"/>
</dbReference>
<dbReference type="NCBIfam" id="TIGR00344">
    <property type="entry name" value="alaS"/>
    <property type="match status" value="1"/>
</dbReference>
<dbReference type="PANTHER" id="PTHR11777:SF9">
    <property type="entry name" value="ALANINE--TRNA LIGASE, CYTOPLASMIC"/>
    <property type="match status" value="1"/>
</dbReference>
<dbReference type="PANTHER" id="PTHR11777">
    <property type="entry name" value="ALANYL-TRNA SYNTHETASE"/>
    <property type="match status" value="1"/>
</dbReference>
<dbReference type="Pfam" id="PF02272">
    <property type="entry name" value="DHHA1"/>
    <property type="match status" value="1"/>
</dbReference>
<dbReference type="Pfam" id="PF01411">
    <property type="entry name" value="tRNA-synt_2c"/>
    <property type="match status" value="1"/>
</dbReference>
<dbReference type="Pfam" id="PF07973">
    <property type="entry name" value="tRNA_SAD"/>
    <property type="match status" value="1"/>
</dbReference>
<dbReference type="PRINTS" id="PR00980">
    <property type="entry name" value="TRNASYNTHALA"/>
</dbReference>
<dbReference type="SMART" id="SM00863">
    <property type="entry name" value="tRNA_SAD"/>
    <property type="match status" value="1"/>
</dbReference>
<dbReference type="SUPFAM" id="SSF55681">
    <property type="entry name" value="Class II aaRS and biotin synthetases"/>
    <property type="match status" value="1"/>
</dbReference>
<dbReference type="SUPFAM" id="SSF101353">
    <property type="entry name" value="Putative anticodon-binding domain of alanyl-tRNA synthetase (AlaRS)"/>
    <property type="match status" value="1"/>
</dbReference>
<dbReference type="SUPFAM" id="SSF55186">
    <property type="entry name" value="ThrRS/AlaRS common domain"/>
    <property type="match status" value="1"/>
</dbReference>
<dbReference type="SUPFAM" id="SSF50447">
    <property type="entry name" value="Translation proteins"/>
    <property type="match status" value="1"/>
</dbReference>
<dbReference type="PROSITE" id="PS50860">
    <property type="entry name" value="AA_TRNA_LIGASE_II_ALA"/>
    <property type="match status" value="1"/>
</dbReference>
<name>SYA_PROMS</name>
<accession>A2BNH2</accession>
<evidence type="ECO:0000255" key="1">
    <source>
        <dbReference type="HAMAP-Rule" id="MF_00036"/>
    </source>
</evidence>